<evidence type="ECO:0000255" key="1">
    <source>
        <dbReference type="HAMAP-Rule" id="MF_01346"/>
    </source>
</evidence>
<gene>
    <name evidence="1" type="primary">atpA</name>
    <name type="ordered locus">DVU_0777</name>
</gene>
<dbReference type="EC" id="7.1.2.2" evidence="1"/>
<dbReference type="EMBL" id="AE017285">
    <property type="protein sequence ID" value="AAS95257.1"/>
    <property type="molecule type" value="Genomic_DNA"/>
</dbReference>
<dbReference type="RefSeq" id="WP_010938078.1">
    <property type="nucleotide sequence ID" value="NC_002937.3"/>
</dbReference>
<dbReference type="RefSeq" id="YP_009998.1">
    <property type="nucleotide sequence ID" value="NC_002937.3"/>
</dbReference>
<dbReference type="SMR" id="Q72E02"/>
<dbReference type="IntAct" id="Q72E02">
    <property type="interactions" value="5"/>
</dbReference>
<dbReference type="STRING" id="882.DVU_0777"/>
<dbReference type="PaxDb" id="882-DVU_0777"/>
<dbReference type="EnsemblBacteria" id="AAS95257">
    <property type="protein sequence ID" value="AAS95257"/>
    <property type="gene ID" value="DVU_0777"/>
</dbReference>
<dbReference type="KEGG" id="dvu:DVU_0777"/>
<dbReference type="PATRIC" id="fig|882.5.peg.732"/>
<dbReference type="eggNOG" id="COG0056">
    <property type="taxonomic scope" value="Bacteria"/>
</dbReference>
<dbReference type="HOGENOM" id="CLU_010091_2_1_7"/>
<dbReference type="OrthoDB" id="9803053at2"/>
<dbReference type="PhylomeDB" id="Q72E02"/>
<dbReference type="Proteomes" id="UP000002194">
    <property type="component" value="Chromosome"/>
</dbReference>
<dbReference type="GO" id="GO:0005886">
    <property type="term" value="C:plasma membrane"/>
    <property type="evidence" value="ECO:0007669"/>
    <property type="project" value="UniProtKB-SubCell"/>
</dbReference>
<dbReference type="GO" id="GO:0045259">
    <property type="term" value="C:proton-transporting ATP synthase complex"/>
    <property type="evidence" value="ECO:0007669"/>
    <property type="project" value="UniProtKB-KW"/>
</dbReference>
<dbReference type="GO" id="GO:0043531">
    <property type="term" value="F:ADP binding"/>
    <property type="evidence" value="ECO:0007669"/>
    <property type="project" value="TreeGrafter"/>
</dbReference>
<dbReference type="GO" id="GO:0005524">
    <property type="term" value="F:ATP binding"/>
    <property type="evidence" value="ECO:0007669"/>
    <property type="project" value="UniProtKB-UniRule"/>
</dbReference>
<dbReference type="GO" id="GO:0046933">
    <property type="term" value="F:proton-transporting ATP synthase activity, rotational mechanism"/>
    <property type="evidence" value="ECO:0007669"/>
    <property type="project" value="UniProtKB-UniRule"/>
</dbReference>
<dbReference type="CDD" id="cd18113">
    <property type="entry name" value="ATP-synt_F1_alpha_C"/>
    <property type="match status" value="1"/>
</dbReference>
<dbReference type="CDD" id="cd18116">
    <property type="entry name" value="ATP-synt_F1_alpha_N"/>
    <property type="match status" value="1"/>
</dbReference>
<dbReference type="CDD" id="cd01132">
    <property type="entry name" value="F1-ATPase_alpha_CD"/>
    <property type="match status" value="1"/>
</dbReference>
<dbReference type="FunFam" id="1.20.150.20:FF:000001">
    <property type="entry name" value="ATP synthase subunit alpha"/>
    <property type="match status" value="1"/>
</dbReference>
<dbReference type="FunFam" id="2.40.30.20:FF:000001">
    <property type="entry name" value="ATP synthase subunit alpha"/>
    <property type="match status" value="1"/>
</dbReference>
<dbReference type="FunFam" id="3.40.50.300:FF:000002">
    <property type="entry name" value="ATP synthase subunit alpha"/>
    <property type="match status" value="1"/>
</dbReference>
<dbReference type="Gene3D" id="2.40.30.20">
    <property type="match status" value="1"/>
</dbReference>
<dbReference type="Gene3D" id="1.20.150.20">
    <property type="entry name" value="ATP synthase alpha/beta chain, C-terminal domain"/>
    <property type="match status" value="1"/>
</dbReference>
<dbReference type="Gene3D" id="3.40.50.300">
    <property type="entry name" value="P-loop containing nucleotide triphosphate hydrolases"/>
    <property type="match status" value="1"/>
</dbReference>
<dbReference type="HAMAP" id="MF_01346">
    <property type="entry name" value="ATP_synth_alpha_bact"/>
    <property type="match status" value="1"/>
</dbReference>
<dbReference type="InterPro" id="IPR023366">
    <property type="entry name" value="ATP_synth_asu-like_sf"/>
</dbReference>
<dbReference type="InterPro" id="IPR000793">
    <property type="entry name" value="ATP_synth_asu_C"/>
</dbReference>
<dbReference type="InterPro" id="IPR038376">
    <property type="entry name" value="ATP_synth_asu_C_sf"/>
</dbReference>
<dbReference type="InterPro" id="IPR033732">
    <property type="entry name" value="ATP_synth_F1_a_nt-bd_dom"/>
</dbReference>
<dbReference type="InterPro" id="IPR005294">
    <property type="entry name" value="ATP_synth_F1_asu"/>
</dbReference>
<dbReference type="InterPro" id="IPR020003">
    <property type="entry name" value="ATPase_a/bsu_AS"/>
</dbReference>
<dbReference type="InterPro" id="IPR004100">
    <property type="entry name" value="ATPase_F1/V1/A1_a/bsu_N"/>
</dbReference>
<dbReference type="InterPro" id="IPR036121">
    <property type="entry name" value="ATPase_F1/V1/A1_a/bsu_N_sf"/>
</dbReference>
<dbReference type="InterPro" id="IPR000194">
    <property type="entry name" value="ATPase_F1/V1/A1_a/bsu_nucl-bd"/>
</dbReference>
<dbReference type="InterPro" id="IPR027417">
    <property type="entry name" value="P-loop_NTPase"/>
</dbReference>
<dbReference type="NCBIfam" id="TIGR00962">
    <property type="entry name" value="atpA"/>
    <property type="match status" value="1"/>
</dbReference>
<dbReference type="NCBIfam" id="NF009884">
    <property type="entry name" value="PRK13343.1"/>
    <property type="match status" value="1"/>
</dbReference>
<dbReference type="PANTHER" id="PTHR48082">
    <property type="entry name" value="ATP SYNTHASE SUBUNIT ALPHA, MITOCHONDRIAL"/>
    <property type="match status" value="1"/>
</dbReference>
<dbReference type="PANTHER" id="PTHR48082:SF2">
    <property type="entry name" value="ATP SYNTHASE SUBUNIT ALPHA, MITOCHONDRIAL"/>
    <property type="match status" value="1"/>
</dbReference>
<dbReference type="Pfam" id="PF00006">
    <property type="entry name" value="ATP-synt_ab"/>
    <property type="match status" value="1"/>
</dbReference>
<dbReference type="Pfam" id="PF00306">
    <property type="entry name" value="ATP-synt_ab_C"/>
    <property type="match status" value="1"/>
</dbReference>
<dbReference type="Pfam" id="PF02874">
    <property type="entry name" value="ATP-synt_ab_N"/>
    <property type="match status" value="1"/>
</dbReference>
<dbReference type="PIRSF" id="PIRSF039088">
    <property type="entry name" value="F_ATPase_subunit_alpha"/>
    <property type="match status" value="1"/>
</dbReference>
<dbReference type="SUPFAM" id="SSF47917">
    <property type="entry name" value="C-terminal domain of alpha and beta subunits of F1 ATP synthase"/>
    <property type="match status" value="1"/>
</dbReference>
<dbReference type="SUPFAM" id="SSF50615">
    <property type="entry name" value="N-terminal domain of alpha and beta subunits of F1 ATP synthase"/>
    <property type="match status" value="1"/>
</dbReference>
<dbReference type="SUPFAM" id="SSF52540">
    <property type="entry name" value="P-loop containing nucleoside triphosphate hydrolases"/>
    <property type="match status" value="1"/>
</dbReference>
<dbReference type="PROSITE" id="PS00152">
    <property type="entry name" value="ATPASE_ALPHA_BETA"/>
    <property type="match status" value="1"/>
</dbReference>
<reference key="1">
    <citation type="journal article" date="2004" name="Nat. Biotechnol.">
        <title>The genome sequence of the anaerobic, sulfate-reducing bacterium Desulfovibrio vulgaris Hildenborough.</title>
        <authorList>
            <person name="Heidelberg J.F."/>
            <person name="Seshadri R."/>
            <person name="Haveman S.A."/>
            <person name="Hemme C.L."/>
            <person name="Paulsen I.T."/>
            <person name="Kolonay J.F."/>
            <person name="Eisen J.A."/>
            <person name="Ward N.L."/>
            <person name="Methe B.A."/>
            <person name="Brinkac L.M."/>
            <person name="Daugherty S.C."/>
            <person name="DeBoy R.T."/>
            <person name="Dodson R.J."/>
            <person name="Durkin A.S."/>
            <person name="Madupu R."/>
            <person name="Nelson W.C."/>
            <person name="Sullivan S.A."/>
            <person name="Fouts D.E."/>
            <person name="Haft D.H."/>
            <person name="Selengut J."/>
            <person name="Peterson J.D."/>
            <person name="Davidsen T.M."/>
            <person name="Zafar N."/>
            <person name="Zhou L."/>
            <person name="Radune D."/>
            <person name="Dimitrov G."/>
            <person name="Hance M."/>
            <person name="Tran K."/>
            <person name="Khouri H.M."/>
            <person name="Gill J."/>
            <person name="Utterback T.R."/>
            <person name="Feldblyum T.V."/>
            <person name="Wall J.D."/>
            <person name="Voordouw G."/>
            <person name="Fraser C.M."/>
        </authorList>
    </citation>
    <scope>NUCLEOTIDE SEQUENCE [LARGE SCALE GENOMIC DNA]</scope>
    <source>
        <strain>ATCC 29579 / DSM 644 / CCUG 34227 / NCIMB 8303 / VKM B-1760 / Hildenborough</strain>
    </source>
</reference>
<feature type="chain" id="PRO_0000238243" description="ATP synthase subunit alpha">
    <location>
        <begin position="1"/>
        <end position="502"/>
    </location>
</feature>
<feature type="binding site" evidence="1">
    <location>
        <begin position="169"/>
        <end position="176"/>
    </location>
    <ligand>
        <name>ATP</name>
        <dbReference type="ChEBI" id="CHEBI:30616"/>
    </ligand>
</feature>
<feature type="site" description="Required for activity" evidence="1">
    <location>
        <position position="362"/>
    </location>
</feature>
<name>ATPA_NITV2</name>
<organism>
    <name type="scientific">Nitratidesulfovibrio vulgaris (strain ATCC 29579 / DSM 644 / CCUG 34227 / NCIMB 8303 / VKM B-1760 / Hildenborough)</name>
    <name type="common">Desulfovibrio vulgaris</name>
    <dbReference type="NCBI Taxonomy" id="882"/>
    <lineage>
        <taxon>Bacteria</taxon>
        <taxon>Pseudomonadati</taxon>
        <taxon>Thermodesulfobacteriota</taxon>
        <taxon>Desulfovibrionia</taxon>
        <taxon>Desulfovibrionales</taxon>
        <taxon>Desulfovibrionaceae</taxon>
        <taxon>Nitratidesulfovibrio</taxon>
    </lineage>
</organism>
<accession>Q72E02</accession>
<sequence length="502" mass="54582">MQIKAEEISKIIEEQIQSYEQRVEMSETGTVLYVGDGIARVHGVQNAMAMELLEFPGGLMGMVLNLEEDNVGVALLGDDTQIKEGDPVKRTGKIFSVPVGDAVMGRVLNPLGQPIDGLGPLDAKEFRPVELKAPGIIARKSVHEPMPTGIKAIDAMTPIGRGQRELVIGDRQTGKTAVCIDAILAQKNTDIHCFYVAIGQKKATVALVADTLRKYGAMEYTTIISATASEPAPLQFISAYSGCTMAEFYRNNGKHALIIYDDLSKQAVAYRQMSLLLRRPPGREAYPGDVFYLHSRLLERAAKVNDSLGAGSLTALPIIETQAGDVSAYIPTNVISITDGQVYLEPNLFNAGIRPAINVGLSVSRVGGAAQIKAMKQVAGTMRLDLAQYRELAAFAQFGSDLDKATKAKLDRGARLVELLKQPQYEPMPTEEQVASMYAATRGLMDDVAVADIRKFETAMLDYLRSGKADILNDIKTKKALDQDIENRLKAAIAEFKKGYQA</sequence>
<proteinExistence type="evidence at protein level"/>
<comment type="function">
    <text evidence="1">Produces ATP from ADP in the presence of a proton gradient across the membrane. The alpha chain is a regulatory subunit.</text>
</comment>
<comment type="catalytic activity">
    <reaction evidence="1">
        <text>ATP + H2O + 4 H(+)(in) = ADP + phosphate + 5 H(+)(out)</text>
        <dbReference type="Rhea" id="RHEA:57720"/>
        <dbReference type="ChEBI" id="CHEBI:15377"/>
        <dbReference type="ChEBI" id="CHEBI:15378"/>
        <dbReference type="ChEBI" id="CHEBI:30616"/>
        <dbReference type="ChEBI" id="CHEBI:43474"/>
        <dbReference type="ChEBI" id="CHEBI:456216"/>
        <dbReference type="EC" id="7.1.2.2"/>
    </reaction>
</comment>
<comment type="subunit">
    <text evidence="1">F-type ATPases have 2 components, CF(1) - the catalytic core - and CF(0) - the membrane proton channel. CF(1) has five subunits: alpha(3), beta(3), gamma(1), delta(1), epsilon(1). CF(0) has three main subunits: a(1), b(2) and c(9-12). The alpha and beta chains form an alternating ring which encloses part of the gamma chain. CF(1) is attached to CF(0) by a central stalk formed by the gamma and epsilon chains, while a peripheral stalk is formed by the delta and b chains.</text>
</comment>
<comment type="interaction">
    <interactant intactId="EBI-10070589">
        <id>Q72E02</id>
    </interactant>
    <interactant intactId="EBI-10070593">
        <id>Q72E03</id>
        <label>atpG</label>
    </interactant>
    <organismsDiffer>false</organismsDiffer>
    <experiments>3</experiments>
</comment>
<comment type="subcellular location">
    <subcellularLocation>
        <location evidence="1">Cell inner membrane</location>
        <topology evidence="1">Peripheral membrane protein</topology>
    </subcellularLocation>
</comment>
<comment type="similarity">
    <text evidence="1">Belongs to the ATPase alpha/beta chains family.</text>
</comment>
<protein>
    <recommendedName>
        <fullName evidence="1">ATP synthase subunit alpha</fullName>
        <ecNumber evidence="1">7.1.2.2</ecNumber>
    </recommendedName>
    <alternativeName>
        <fullName evidence="1">ATP synthase F1 sector subunit alpha</fullName>
    </alternativeName>
    <alternativeName>
        <fullName evidence="1">F-ATPase subunit alpha</fullName>
    </alternativeName>
</protein>
<keyword id="KW-0066">ATP synthesis</keyword>
<keyword id="KW-0067">ATP-binding</keyword>
<keyword id="KW-0997">Cell inner membrane</keyword>
<keyword id="KW-1003">Cell membrane</keyword>
<keyword id="KW-0139">CF(1)</keyword>
<keyword id="KW-0375">Hydrogen ion transport</keyword>
<keyword id="KW-0406">Ion transport</keyword>
<keyword id="KW-0472">Membrane</keyword>
<keyword id="KW-0547">Nucleotide-binding</keyword>
<keyword id="KW-1185">Reference proteome</keyword>
<keyword id="KW-1278">Translocase</keyword>
<keyword id="KW-0813">Transport</keyword>